<feature type="chain" id="PRO_1000149103" description="Histidinol-phosphate aminotransferase">
    <location>
        <begin position="1"/>
        <end position="370"/>
    </location>
</feature>
<feature type="modified residue" description="N6-(pyridoxal phosphate)lysine" evidence="1">
    <location>
        <position position="223"/>
    </location>
</feature>
<proteinExistence type="inferred from homology"/>
<name>HIS8_METNO</name>
<reference key="1">
    <citation type="submission" date="2009-01" db="EMBL/GenBank/DDBJ databases">
        <title>Complete sequence of chromosome of Methylobacterium nodulans ORS 2060.</title>
        <authorList>
            <consortium name="US DOE Joint Genome Institute"/>
            <person name="Lucas S."/>
            <person name="Copeland A."/>
            <person name="Lapidus A."/>
            <person name="Glavina del Rio T."/>
            <person name="Dalin E."/>
            <person name="Tice H."/>
            <person name="Bruce D."/>
            <person name="Goodwin L."/>
            <person name="Pitluck S."/>
            <person name="Sims D."/>
            <person name="Brettin T."/>
            <person name="Detter J.C."/>
            <person name="Han C."/>
            <person name="Larimer F."/>
            <person name="Land M."/>
            <person name="Hauser L."/>
            <person name="Kyrpides N."/>
            <person name="Ivanova N."/>
            <person name="Marx C.J."/>
            <person name="Richardson P."/>
        </authorList>
    </citation>
    <scope>NUCLEOTIDE SEQUENCE [LARGE SCALE GENOMIC DNA]</scope>
    <source>
        <strain>LMG 21967 / CNCM I-2342 / ORS 2060</strain>
    </source>
</reference>
<sequence length="370" mass="38902">MSAALRPVPRPGVLEIEAYVPGKSAAPAGVKLHKLSSNETPLGPSLAAIAAMRETGAHLELYPDGSATDLRRAIAGKYGLDPERIVCGAGSDELLSLLTYAYLGPGDEGVYSQYGFLVYRIAILAAGGTPVVAPERDHTADVDAILKAVTPRTRIVYLANPNNPTGTYLPFDEVRRLHAGLPGNVLLVLDAAYAEYVRRNDYAAGLELVAESENVVMTRTFSKVYGLAALRIGWMVAPAAVVDAVNRIRGPFNLSTAAIAAGTAAIADDAHIAAAVAHNDAWLPKVTRALTDLGLQVTPSVGNFVLIHFPDAPGRSAADADAFLTARGLILRRVGAYGLPNALRMTIGSAEANEAVIAALGDFMREQDDA</sequence>
<comment type="catalytic activity">
    <reaction evidence="1">
        <text>L-histidinol phosphate + 2-oxoglutarate = 3-(imidazol-4-yl)-2-oxopropyl phosphate + L-glutamate</text>
        <dbReference type="Rhea" id="RHEA:23744"/>
        <dbReference type="ChEBI" id="CHEBI:16810"/>
        <dbReference type="ChEBI" id="CHEBI:29985"/>
        <dbReference type="ChEBI" id="CHEBI:57766"/>
        <dbReference type="ChEBI" id="CHEBI:57980"/>
        <dbReference type="EC" id="2.6.1.9"/>
    </reaction>
</comment>
<comment type="cofactor">
    <cofactor evidence="1">
        <name>pyridoxal 5'-phosphate</name>
        <dbReference type="ChEBI" id="CHEBI:597326"/>
    </cofactor>
</comment>
<comment type="pathway">
    <text evidence="1">Amino-acid biosynthesis; L-histidine biosynthesis; L-histidine from 5-phospho-alpha-D-ribose 1-diphosphate: step 7/9.</text>
</comment>
<comment type="subunit">
    <text evidence="1">Homodimer.</text>
</comment>
<comment type="similarity">
    <text evidence="1">Belongs to the class-II pyridoxal-phosphate-dependent aminotransferase family. Histidinol-phosphate aminotransferase subfamily.</text>
</comment>
<organism>
    <name type="scientific">Methylobacterium nodulans (strain LMG 21967 / CNCM I-2342 / ORS 2060)</name>
    <dbReference type="NCBI Taxonomy" id="460265"/>
    <lineage>
        <taxon>Bacteria</taxon>
        <taxon>Pseudomonadati</taxon>
        <taxon>Pseudomonadota</taxon>
        <taxon>Alphaproteobacteria</taxon>
        <taxon>Hyphomicrobiales</taxon>
        <taxon>Methylobacteriaceae</taxon>
        <taxon>Methylobacterium</taxon>
    </lineage>
</organism>
<keyword id="KW-0028">Amino-acid biosynthesis</keyword>
<keyword id="KW-0032">Aminotransferase</keyword>
<keyword id="KW-0368">Histidine biosynthesis</keyword>
<keyword id="KW-0663">Pyridoxal phosphate</keyword>
<keyword id="KW-1185">Reference proteome</keyword>
<keyword id="KW-0808">Transferase</keyword>
<dbReference type="EC" id="2.6.1.9" evidence="1"/>
<dbReference type="EMBL" id="CP001349">
    <property type="protein sequence ID" value="ACL60645.1"/>
    <property type="molecule type" value="Genomic_DNA"/>
</dbReference>
<dbReference type="RefSeq" id="WP_015932244.1">
    <property type="nucleotide sequence ID" value="NC_011894.1"/>
</dbReference>
<dbReference type="SMR" id="B8IRU5"/>
<dbReference type="STRING" id="460265.Mnod_5817"/>
<dbReference type="KEGG" id="mno:Mnod_5817"/>
<dbReference type="eggNOG" id="COG0079">
    <property type="taxonomic scope" value="Bacteria"/>
</dbReference>
<dbReference type="HOGENOM" id="CLU_017584_3_3_5"/>
<dbReference type="OrthoDB" id="9809616at2"/>
<dbReference type="UniPathway" id="UPA00031">
    <property type="reaction ID" value="UER00012"/>
</dbReference>
<dbReference type="Proteomes" id="UP000008207">
    <property type="component" value="Chromosome"/>
</dbReference>
<dbReference type="GO" id="GO:0004400">
    <property type="term" value="F:histidinol-phosphate transaminase activity"/>
    <property type="evidence" value="ECO:0007669"/>
    <property type="project" value="UniProtKB-UniRule"/>
</dbReference>
<dbReference type="GO" id="GO:0030170">
    <property type="term" value="F:pyridoxal phosphate binding"/>
    <property type="evidence" value="ECO:0007669"/>
    <property type="project" value="InterPro"/>
</dbReference>
<dbReference type="GO" id="GO:0000105">
    <property type="term" value="P:L-histidine biosynthetic process"/>
    <property type="evidence" value="ECO:0007669"/>
    <property type="project" value="UniProtKB-UniRule"/>
</dbReference>
<dbReference type="CDD" id="cd00609">
    <property type="entry name" value="AAT_like"/>
    <property type="match status" value="1"/>
</dbReference>
<dbReference type="Gene3D" id="3.90.1150.10">
    <property type="entry name" value="Aspartate Aminotransferase, domain 1"/>
    <property type="match status" value="1"/>
</dbReference>
<dbReference type="Gene3D" id="3.40.640.10">
    <property type="entry name" value="Type I PLP-dependent aspartate aminotransferase-like (Major domain)"/>
    <property type="match status" value="1"/>
</dbReference>
<dbReference type="HAMAP" id="MF_01023">
    <property type="entry name" value="HisC_aminotrans_2"/>
    <property type="match status" value="1"/>
</dbReference>
<dbReference type="InterPro" id="IPR004839">
    <property type="entry name" value="Aminotransferase_I/II_large"/>
</dbReference>
<dbReference type="InterPro" id="IPR005861">
    <property type="entry name" value="HisP_aminotrans"/>
</dbReference>
<dbReference type="InterPro" id="IPR050106">
    <property type="entry name" value="HistidinolP_aminotransfase"/>
</dbReference>
<dbReference type="InterPro" id="IPR015424">
    <property type="entry name" value="PyrdxlP-dep_Trfase"/>
</dbReference>
<dbReference type="InterPro" id="IPR015421">
    <property type="entry name" value="PyrdxlP-dep_Trfase_major"/>
</dbReference>
<dbReference type="InterPro" id="IPR015422">
    <property type="entry name" value="PyrdxlP-dep_Trfase_small"/>
</dbReference>
<dbReference type="NCBIfam" id="TIGR01141">
    <property type="entry name" value="hisC"/>
    <property type="match status" value="1"/>
</dbReference>
<dbReference type="PANTHER" id="PTHR43643:SF3">
    <property type="entry name" value="HISTIDINOL-PHOSPHATE AMINOTRANSFERASE"/>
    <property type="match status" value="1"/>
</dbReference>
<dbReference type="PANTHER" id="PTHR43643">
    <property type="entry name" value="HISTIDINOL-PHOSPHATE AMINOTRANSFERASE 2"/>
    <property type="match status" value="1"/>
</dbReference>
<dbReference type="Pfam" id="PF00155">
    <property type="entry name" value="Aminotran_1_2"/>
    <property type="match status" value="1"/>
</dbReference>
<dbReference type="SUPFAM" id="SSF53383">
    <property type="entry name" value="PLP-dependent transferases"/>
    <property type="match status" value="1"/>
</dbReference>
<accession>B8IRU5</accession>
<gene>
    <name evidence="1" type="primary">hisC</name>
    <name type="ordered locus">Mnod_5817</name>
</gene>
<protein>
    <recommendedName>
        <fullName evidence="1">Histidinol-phosphate aminotransferase</fullName>
        <ecNumber evidence="1">2.6.1.9</ecNumber>
    </recommendedName>
    <alternativeName>
        <fullName evidence="1">Imidazole acetol-phosphate transaminase</fullName>
    </alternativeName>
</protein>
<evidence type="ECO:0000255" key="1">
    <source>
        <dbReference type="HAMAP-Rule" id="MF_01023"/>
    </source>
</evidence>